<accession>P60202</accession>
<accession>P04400</accession>
<accession>P06905</accession>
<accession>Q9WUS9</accession>
<reference key="1">
    <citation type="journal article" date="1987" name="Proc. Natl. Acad. Sci. U.S.A.">
        <title>Aberrant splicing of proteolipid protein mRNA in the dysmyelinating jimpy mutant mouse.</title>
        <authorList>
            <person name="Hudson L.D."/>
            <person name="Berndt J.A."/>
            <person name="Puckett C."/>
            <person name="Kozak C.A."/>
            <person name="Lazzarini R.A."/>
        </authorList>
    </citation>
    <scope>NUCLEOTIDE SEQUENCE [MRNA] (ISOFORMS 1 AND DM-20)</scope>
</reference>
<reference key="2">
    <citation type="journal article" date="1988" name="J. Mol. Biol.">
        <title>Myelin proteolipid protein gene structure and its regulation of expression in normal and jimpy mutant mice.</title>
        <authorList>
            <person name="Ikenaka K."/>
            <person name="Furuichi T."/>
            <person name="Iwasaki Y."/>
            <person name="Moriguchi A."/>
            <person name="Okano H."/>
            <person name="Mikoshiba K."/>
        </authorList>
    </citation>
    <scope>NUCLEOTIDE SEQUENCE [GENOMIC DNA] (ISOFORM 1)</scope>
</reference>
<reference key="3">
    <citation type="journal article" date="1987" name="J. Neurosci. Res.">
        <title>Structure and expression of the mouse myelin proteolipid protein gene.</title>
        <authorList>
            <person name="Macklin W.B."/>
            <person name="Campagnoni C.W."/>
            <person name="Deininger P.L."/>
            <person name="Gardinier M.V."/>
        </authorList>
    </citation>
    <scope>NUCLEOTIDE SEQUENCE (ISOFORM 1)</scope>
    <source>
        <strain>BALB/cByJ</strain>
    </source>
</reference>
<reference key="4">
    <citation type="journal article" date="1986" name="Proc. Natl. Acad. Sci. U.S.A.">
        <title>Jimpy mutant mouse: a 74-base deletion in the mRNA for myelin proteolipid protein and evidence for a primary defect in RNA splicing.</title>
        <authorList>
            <person name="Nave K.-A."/>
            <person name="Lai C."/>
            <person name="Bloom F.E."/>
            <person name="Milner R.J."/>
        </authorList>
    </citation>
    <scope>NUCLEOTIDE SEQUENCE [MRNA] (ISOFORM 1)</scope>
</reference>
<reference key="5">
    <citation type="journal article" date="1987" name="Proc. Natl. Acad. Sci. U.S.A.">
        <title>Splice site selection in the proteolipid protein (PLP) gene transcript and primary structure of the DM-20 protein of central nervous system myelin.</title>
        <authorList>
            <person name="Nave K.-A."/>
            <person name="Lai C."/>
            <person name="Bloom F.E."/>
            <person name="Milner R.J."/>
        </authorList>
    </citation>
    <scope>NUCLEOTIDE SEQUENCE [MRNA] (ISOFORM DM-20)</scope>
</reference>
<reference key="6">
    <citation type="journal article" date="2004" name="Genome Res.">
        <title>The status, quality, and expansion of the NIH full-length cDNA project: the Mammalian Gene Collection (MGC).</title>
        <authorList>
            <consortium name="The MGC Project Team"/>
        </authorList>
    </citation>
    <scope>NUCLEOTIDE SEQUENCE [LARGE SCALE MRNA] (ISOFORM 1)</scope>
    <source>
        <tissue>Retina</tissue>
    </source>
</reference>
<reference key="7">
    <citation type="submission" date="2007-04" db="UniProtKB">
        <authorList>
            <person name="Lubec G."/>
            <person name="Kang S.U."/>
        </authorList>
    </citation>
    <scope>PROTEIN SEQUENCE OF 2-9; 46-53; 99-122; 145-151 AND 193-229</scope>
    <scope>IDENTIFICATION BY MASS SPECTROMETRY</scope>
    <source>
        <strain>C57BL/6J</strain>
        <tissue>Brain</tissue>
    </source>
</reference>
<reference key="8">
    <citation type="journal article" date="1987" name="J. Neurochem.">
        <title>Developmental expression of the myelin proteolipid protein and basic protein mRNAs in normal and dysmyelinating mutant mice.</title>
        <authorList>
            <person name="Sorg B.A."/>
            <person name="Smith M.M."/>
            <person name="Campagnoni A.T."/>
        </authorList>
    </citation>
    <scope>NUCLEOTIDE SEQUENCE OF 50-277</scope>
</reference>
<reference key="9">
    <citation type="journal article" date="1986" name="Mol. Cell. Biol.">
        <title>Characterization of myelin proteolipid mRNAs in normal and jimpy mice.</title>
        <authorList>
            <person name="Gardinier M.V."/>
            <person name="Macklin W.B."/>
            <person name="Diniak A.J."/>
            <person name="Deininger P.L."/>
        </authorList>
    </citation>
    <scope>NUCLEOTIDE SEQUENCE OF 176-270</scope>
</reference>
<reference key="10">
    <citation type="journal article" date="1987" name="FEBS Lett.">
        <title>An AG to a GG transition at a splice site in the myelin proteolipid protein gene in jimpy mice results in the removal of an exon.</title>
        <authorList>
            <person name="Macklin W.B."/>
            <person name="Gardinier M.V."/>
            <person name="King K.D."/>
            <person name="Kampf K."/>
        </authorList>
    </citation>
    <scope>NUCLEOTIDE SEQUENCE [GENOMIC DNA] OF 209-232</scope>
    <scope>ALTERNATIVE SPLICING</scope>
</reference>
<reference key="11">
    <citation type="journal article" date="2007" name="J. Neurosci.">
        <title>Proteolipid protein is required for transport of sirtuin 2 into CNS myelin.</title>
        <authorList>
            <person name="Werner H.B."/>
            <person name="Kuhlmann K."/>
            <person name="Shen S."/>
            <person name="Uecker M."/>
            <person name="Schardt A."/>
            <person name="Dimova K."/>
            <person name="Orfaniotou F."/>
            <person name="Dhaunchak A."/>
            <person name="Brinkmann B.G."/>
            <person name="Mobius W."/>
            <person name="Guarente L."/>
            <person name="Casaccia-Bonnefil P."/>
            <person name="Jahn O."/>
            <person name="Nave K.A."/>
        </authorList>
    </citation>
    <scope>SUBCELLULAR LOCATION</scope>
</reference>
<reference key="12">
    <citation type="journal article" date="2010" name="Cell">
        <title>A tissue-specific atlas of mouse protein phosphorylation and expression.</title>
        <authorList>
            <person name="Huttlin E.L."/>
            <person name="Jedrychowski M.P."/>
            <person name="Elias J.E."/>
            <person name="Goswami T."/>
            <person name="Rad R."/>
            <person name="Beausoleil S.A."/>
            <person name="Villen J."/>
            <person name="Haas W."/>
            <person name="Sowa M.E."/>
            <person name="Gygi S.P."/>
        </authorList>
    </citation>
    <scope>IDENTIFICATION BY MASS SPECTROMETRY [LARGE SCALE ANALYSIS]</scope>
    <source>
        <tissue>Brain</tissue>
        <tissue>Brown adipose tissue</tissue>
        <tissue>Heart</tissue>
        <tissue>Kidney</tissue>
        <tissue>Liver</tissue>
    </source>
</reference>
<reference key="13">
    <citation type="journal article" date="1990" name="J. Neurosci.">
        <title>Conservative amino acid substitution in the myelin proteolipid protein of jimpymsd mice.</title>
        <authorList>
            <person name="Gencic S."/>
            <person name="Hudson L.D."/>
        </authorList>
    </citation>
    <scope>VARIANT JIMPY MSD VAL-243</scope>
</reference>
<reference key="14">
    <citation type="journal article" date="1992" name="Nature">
        <title>Uncoupling of hypomyelination and glial cell death by a mutation in the proteolipid protein gene.</title>
        <authorList>
            <person name="Schneider A."/>
            <person name="Montague P."/>
            <person name="Griffiths I."/>
            <person name="Fanarraga M."/>
            <person name="Kennedy P."/>
            <person name="Brophy P."/>
            <person name="Nave K.-A."/>
        </authorList>
    </citation>
    <scope>VARIANT RUMPSHAKER THR-187</scope>
</reference>
<gene>
    <name type="primary">Plp1</name>
    <name type="synonym">Plp</name>
</gene>
<comment type="function">
    <text>This is the major myelin protein from the central nervous system. It plays an important role in the formation or maintenance of the multilamellar structure of myelin.</text>
</comment>
<comment type="subunit">
    <text evidence="3">Interacts with MAL.</text>
</comment>
<comment type="subcellular location">
    <subcellularLocation>
        <location evidence="7">Cell membrane</location>
        <topology evidence="7">Multi-pass membrane protein</topology>
    </subcellularLocation>
    <subcellularLocation>
        <location evidence="7">Myelin membrane</location>
    </subcellularLocation>
    <text>Colocalizes with SIRT2 in internodal regions, at paranodal axoglial junction and Schmidt-Lanterman incisures of myelin sheat.</text>
</comment>
<comment type="alternative products">
    <event type="alternative splicing"/>
    <isoform>
        <id>P60202-1</id>
        <name>1</name>
        <sequence type="displayed"/>
    </isoform>
    <isoform>
        <id>P60202-2</id>
        <name>DM-20</name>
        <sequence type="described" ref="VSP_009194"/>
    </isoform>
</comment>
<comment type="disease">
    <text>Defects in Plp1 are the cause of the dysmyelinating diseases Jimpy and Rumpshaker (rsh).</text>
</comment>
<comment type="similarity">
    <text evidence="10">Belongs to the myelin proteolipid protein family.</text>
</comment>
<evidence type="ECO:0000250" key="1"/>
<evidence type="ECO:0000250" key="2">
    <source>
        <dbReference type="UniProtKB" id="P04116"/>
    </source>
</evidence>
<evidence type="ECO:0000250" key="3">
    <source>
        <dbReference type="UniProtKB" id="P60201"/>
    </source>
</evidence>
<evidence type="ECO:0000250" key="4">
    <source>
        <dbReference type="UniProtKB" id="P60203"/>
    </source>
</evidence>
<evidence type="ECO:0000269" key="5">
    <source>
    </source>
</evidence>
<evidence type="ECO:0000269" key="6">
    <source>
    </source>
</evidence>
<evidence type="ECO:0000269" key="7">
    <source>
    </source>
</evidence>
<evidence type="ECO:0000303" key="8">
    <source>
    </source>
</evidence>
<evidence type="ECO:0000303" key="9">
    <source>
    </source>
</evidence>
<evidence type="ECO:0000305" key="10"/>
<organism>
    <name type="scientific">Mus musculus</name>
    <name type="common">Mouse</name>
    <dbReference type="NCBI Taxonomy" id="10090"/>
    <lineage>
        <taxon>Eukaryota</taxon>
        <taxon>Metazoa</taxon>
        <taxon>Chordata</taxon>
        <taxon>Craniata</taxon>
        <taxon>Vertebrata</taxon>
        <taxon>Euteleostomi</taxon>
        <taxon>Mammalia</taxon>
        <taxon>Eutheria</taxon>
        <taxon>Euarchontoglires</taxon>
        <taxon>Glires</taxon>
        <taxon>Rodentia</taxon>
        <taxon>Myomorpha</taxon>
        <taxon>Muroidea</taxon>
        <taxon>Muridae</taxon>
        <taxon>Murinae</taxon>
        <taxon>Mus</taxon>
        <taxon>Mus</taxon>
    </lineage>
</organism>
<protein>
    <recommendedName>
        <fullName>Myelin proteolipid protein</fullName>
        <shortName>PLP</shortName>
    </recommendedName>
    <alternativeName>
        <fullName>Lipophilin</fullName>
    </alternativeName>
</protein>
<keyword id="KW-0025">Alternative splicing</keyword>
<keyword id="KW-1003">Cell membrane</keyword>
<keyword id="KW-0903">Direct protein sequencing</keyword>
<keyword id="KW-0225">Disease variant</keyword>
<keyword id="KW-1015">Disulfide bond</keyword>
<keyword id="KW-0449">Lipoprotein</keyword>
<keyword id="KW-0472">Membrane</keyword>
<keyword id="KW-0564">Palmitate</keyword>
<keyword id="KW-0597">Phosphoprotein</keyword>
<keyword id="KW-1185">Reference proteome</keyword>
<keyword id="KW-0812">Transmembrane</keyword>
<keyword id="KW-1133">Transmembrane helix</keyword>
<dbReference type="EMBL" id="M15442">
    <property type="protein sequence ID" value="AAA39951.1"/>
    <property type="molecule type" value="mRNA"/>
</dbReference>
<dbReference type="EMBL" id="M15442">
    <property type="protein sequence ID" value="AAA39952.1"/>
    <property type="status" value="ALT_SEQ"/>
    <property type="molecule type" value="mRNA"/>
</dbReference>
<dbReference type="EMBL" id="M15442">
    <property type="protein sequence ID" value="AAA39953.1"/>
    <property type="molecule type" value="mRNA"/>
</dbReference>
<dbReference type="EMBL" id="X07215">
    <property type="protein sequence ID" value="CAA30184.1"/>
    <property type="molecule type" value="Genomic_DNA"/>
</dbReference>
<dbReference type="EMBL" id="X07216">
    <property type="protein sequence ID" value="CAA30184.1"/>
    <property type="status" value="JOINED"/>
    <property type="molecule type" value="Genomic_DNA"/>
</dbReference>
<dbReference type="EMBL" id="X07217">
    <property type="protein sequence ID" value="CAA30184.1"/>
    <property type="status" value="JOINED"/>
    <property type="molecule type" value="Genomic_DNA"/>
</dbReference>
<dbReference type="EMBL" id="X07218">
    <property type="protein sequence ID" value="CAA30184.1"/>
    <property type="status" value="JOINED"/>
    <property type="molecule type" value="Genomic_DNA"/>
</dbReference>
<dbReference type="EMBL" id="X07219">
    <property type="protein sequence ID" value="CAA30184.1"/>
    <property type="status" value="JOINED"/>
    <property type="molecule type" value="Genomic_DNA"/>
</dbReference>
<dbReference type="EMBL" id="X07220">
    <property type="protein sequence ID" value="CAA30184.1"/>
    <property type="status" value="JOINED"/>
    <property type="molecule type" value="Genomic_DNA"/>
</dbReference>
<dbReference type="EMBL" id="X07221">
    <property type="protein sequence ID" value="CAA30184.1"/>
    <property type="status" value="JOINED"/>
    <property type="molecule type" value="Genomic_DNA"/>
</dbReference>
<dbReference type="EMBL" id="M37335">
    <property type="protein sequence ID" value="AAA39954.1"/>
    <property type="molecule type" value="Genomic_DNA"/>
</dbReference>
<dbReference type="EMBL" id="M37329">
    <property type="protein sequence ID" value="AAA39954.1"/>
    <property type="status" value="JOINED"/>
    <property type="molecule type" value="Genomic_DNA"/>
</dbReference>
<dbReference type="EMBL" id="M37330">
    <property type="protein sequence ID" value="AAA39954.1"/>
    <property type="status" value="JOINED"/>
    <property type="molecule type" value="Genomic_DNA"/>
</dbReference>
<dbReference type="EMBL" id="M37331">
    <property type="protein sequence ID" value="AAA39954.1"/>
    <property type="status" value="JOINED"/>
    <property type="molecule type" value="Genomic_DNA"/>
</dbReference>
<dbReference type="EMBL" id="M37332">
    <property type="protein sequence ID" value="AAA39954.1"/>
    <property type="status" value="JOINED"/>
    <property type="molecule type" value="Genomic_DNA"/>
</dbReference>
<dbReference type="EMBL" id="M37333">
    <property type="protein sequence ID" value="AAA39954.1"/>
    <property type="status" value="JOINED"/>
    <property type="molecule type" value="Genomic_DNA"/>
</dbReference>
<dbReference type="EMBL" id="M37334">
    <property type="protein sequence ID" value="AAA39954.1"/>
    <property type="status" value="JOINED"/>
    <property type="molecule type" value="Genomic_DNA"/>
</dbReference>
<dbReference type="EMBL" id="M14674">
    <property type="protein sequence ID" value="AAA39955.1"/>
    <property type="molecule type" value="mRNA"/>
</dbReference>
<dbReference type="EMBL" id="M16472">
    <property type="protein sequence ID" value="AAA39950.1"/>
    <property type="molecule type" value="mRNA"/>
</dbReference>
<dbReference type="EMBL" id="BC027010">
    <property type="protein sequence ID" value="AAH27010.1"/>
    <property type="molecule type" value="mRNA"/>
</dbReference>
<dbReference type="EMBL" id="X06375">
    <property type="protein sequence ID" value="CAB40821.1"/>
    <property type="molecule type" value="Genomic_DNA"/>
</dbReference>
<dbReference type="CCDS" id="CCDS30424.1">
    <molecule id="P60202-1"/>
</dbReference>
<dbReference type="CCDS" id="CCDS72436.1">
    <molecule id="P60202-2"/>
</dbReference>
<dbReference type="PIR" id="S34792">
    <property type="entry name" value="S34792"/>
</dbReference>
<dbReference type="RefSeq" id="NP_001277490.1">
    <molecule id="P60202-2"/>
    <property type="nucleotide sequence ID" value="NM_001290561.2"/>
</dbReference>
<dbReference type="RefSeq" id="NP_001277491.1">
    <property type="nucleotide sequence ID" value="NM_001290562.1"/>
</dbReference>
<dbReference type="RefSeq" id="NP_001346046.1">
    <molecule id="P60202-1"/>
    <property type="nucleotide sequence ID" value="NM_001359117.1"/>
</dbReference>
<dbReference type="RefSeq" id="NP_001346047.1">
    <molecule id="P60202-2"/>
    <property type="nucleotide sequence ID" value="NM_001359118.1"/>
</dbReference>
<dbReference type="RefSeq" id="NP_001346048.1">
    <molecule id="P60202-1"/>
    <property type="nucleotide sequence ID" value="NM_001359119.1"/>
</dbReference>
<dbReference type="RefSeq" id="NP_001346049.1">
    <molecule id="P60202-1"/>
    <property type="nucleotide sequence ID" value="NM_001359120.1"/>
</dbReference>
<dbReference type="RefSeq" id="NP_035253.1">
    <molecule id="P60202-1"/>
    <property type="nucleotide sequence ID" value="NM_011123.4"/>
</dbReference>
<dbReference type="RefSeq" id="XP_017173919.1">
    <property type="nucleotide sequence ID" value="XM_017318430.1"/>
</dbReference>
<dbReference type="RefSeq" id="XP_017173920.1">
    <property type="nucleotide sequence ID" value="XM_017318431.1"/>
</dbReference>
<dbReference type="RefSeq" id="XP_017173921.1">
    <property type="nucleotide sequence ID" value="XM_017318432.1"/>
</dbReference>
<dbReference type="SMR" id="P60202"/>
<dbReference type="BioGRID" id="202254">
    <property type="interactions" value="29"/>
</dbReference>
<dbReference type="CORUM" id="P60202"/>
<dbReference type="DIP" id="DIP-46200N"/>
<dbReference type="FunCoup" id="P60202">
    <property type="interactions" value="104"/>
</dbReference>
<dbReference type="IntAct" id="P60202">
    <property type="interactions" value="3"/>
</dbReference>
<dbReference type="STRING" id="10090.ENSMUSP00000033800"/>
<dbReference type="GlyGen" id="P60202">
    <property type="glycosylation" value="3 sites, 1 O-linked glycan (3 sites)"/>
</dbReference>
<dbReference type="iPTMnet" id="P60202"/>
<dbReference type="PhosphoSitePlus" id="P60202"/>
<dbReference type="SwissPalm" id="P60202"/>
<dbReference type="PaxDb" id="10090-ENSMUSP00000033800"/>
<dbReference type="PeptideAtlas" id="P60202"/>
<dbReference type="ProteomicsDB" id="287341">
    <molecule id="P60202-1"/>
</dbReference>
<dbReference type="ProteomicsDB" id="287342">
    <molecule id="P60202-2"/>
</dbReference>
<dbReference type="Antibodypedia" id="582">
    <property type="antibodies" value="313 antibodies from 30 providers"/>
</dbReference>
<dbReference type="DNASU" id="18823"/>
<dbReference type="Ensembl" id="ENSMUST00000033800.13">
    <molecule id="P60202-1"/>
    <property type="protein sequence ID" value="ENSMUSP00000033800.7"/>
    <property type="gene ID" value="ENSMUSG00000031425.16"/>
</dbReference>
<dbReference type="Ensembl" id="ENSMUST00000113085.2">
    <molecule id="P60202-2"/>
    <property type="protein sequence ID" value="ENSMUSP00000108708.2"/>
    <property type="gene ID" value="ENSMUSG00000031425.16"/>
</dbReference>
<dbReference type="GeneID" id="18823"/>
<dbReference type="KEGG" id="mmu:18823"/>
<dbReference type="UCSC" id="uc009ujc.2">
    <molecule id="P60202-1"/>
    <property type="organism name" value="mouse"/>
</dbReference>
<dbReference type="UCSC" id="uc009ujd.2">
    <molecule id="P60202-2"/>
    <property type="organism name" value="mouse"/>
</dbReference>
<dbReference type="AGR" id="MGI:97623"/>
<dbReference type="CTD" id="5354"/>
<dbReference type="MGI" id="MGI:97623">
    <property type="gene designation" value="Plp1"/>
</dbReference>
<dbReference type="VEuPathDB" id="HostDB:ENSMUSG00000031425"/>
<dbReference type="eggNOG" id="KOG4800">
    <property type="taxonomic scope" value="Eukaryota"/>
</dbReference>
<dbReference type="GeneTree" id="ENSGT00390000006915"/>
<dbReference type="HOGENOM" id="CLU_064167_2_1_1"/>
<dbReference type="InParanoid" id="P60202"/>
<dbReference type="OMA" id="AVCKTRE"/>
<dbReference type="OrthoDB" id="9993736at2759"/>
<dbReference type="PhylomeDB" id="P60202"/>
<dbReference type="TreeFam" id="TF315162"/>
<dbReference type="BioGRID-ORCS" id="18823">
    <property type="hits" value="1 hit in 79 CRISPR screens"/>
</dbReference>
<dbReference type="CD-CODE" id="CE726F99">
    <property type="entry name" value="Postsynaptic density"/>
</dbReference>
<dbReference type="ChiTaRS" id="Plp1">
    <property type="organism name" value="mouse"/>
</dbReference>
<dbReference type="PRO" id="PR:P60202"/>
<dbReference type="Proteomes" id="UP000000589">
    <property type="component" value="Chromosome X"/>
</dbReference>
<dbReference type="RNAct" id="P60202">
    <property type="molecule type" value="protein"/>
</dbReference>
<dbReference type="Bgee" id="ENSMUSG00000031425">
    <property type="expression patterns" value="Expressed in globus pallidus and 264 other cell types or tissues"/>
</dbReference>
<dbReference type="ExpressionAtlas" id="P60202">
    <property type="expression patterns" value="baseline and differential"/>
</dbReference>
<dbReference type="GO" id="GO:0043209">
    <property type="term" value="C:myelin sheath"/>
    <property type="evidence" value="ECO:0000314"/>
    <property type="project" value="MGI"/>
</dbReference>
<dbReference type="GO" id="GO:0005886">
    <property type="term" value="C:plasma membrane"/>
    <property type="evidence" value="ECO:0000250"/>
    <property type="project" value="UniProtKB"/>
</dbReference>
<dbReference type="GO" id="GO:0014002">
    <property type="term" value="P:astrocyte development"/>
    <property type="evidence" value="ECO:0000316"/>
    <property type="project" value="MGI"/>
</dbReference>
<dbReference type="GO" id="GO:0061564">
    <property type="term" value="P:axon development"/>
    <property type="evidence" value="ECO:0000316"/>
    <property type="project" value="MGI"/>
</dbReference>
<dbReference type="GO" id="GO:0008366">
    <property type="term" value="P:axon ensheathment"/>
    <property type="evidence" value="ECO:0000315"/>
    <property type="project" value="MGI"/>
</dbReference>
<dbReference type="GO" id="GO:0048469">
    <property type="term" value="P:cell maturation"/>
    <property type="evidence" value="ECO:0000315"/>
    <property type="project" value="MGI"/>
</dbReference>
<dbReference type="GO" id="GO:0022010">
    <property type="term" value="P:central nervous system myelination"/>
    <property type="evidence" value="ECO:0000315"/>
    <property type="project" value="MGI"/>
</dbReference>
<dbReference type="GO" id="GO:0006954">
    <property type="term" value="P:inflammatory response"/>
    <property type="evidence" value="ECO:0000316"/>
    <property type="project" value="MGI"/>
</dbReference>
<dbReference type="GO" id="GO:0042759">
    <property type="term" value="P:long-chain fatty acid biosynthetic process"/>
    <property type="evidence" value="ECO:0000315"/>
    <property type="project" value="MGI"/>
</dbReference>
<dbReference type="GO" id="GO:0042552">
    <property type="term" value="P:myelination"/>
    <property type="evidence" value="ECO:0000315"/>
    <property type="project" value="MGI"/>
</dbReference>
<dbReference type="GO" id="GO:0010628">
    <property type="term" value="P:positive regulation of gene expression"/>
    <property type="evidence" value="ECO:0000315"/>
    <property type="project" value="UniProtKB"/>
</dbReference>
<dbReference type="InterPro" id="IPR001614">
    <property type="entry name" value="Myelin_PLP"/>
</dbReference>
<dbReference type="InterPro" id="IPR018237">
    <property type="entry name" value="Myelin_PLP_CS"/>
</dbReference>
<dbReference type="PANTHER" id="PTHR11683">
    <property type="entry name" value="MYELIN PROTEOLIPID"/>
    <property type="match status" value="1"/>
</dbReference>
<dbReference type="PANTHER" id="PTHR11683:SF11">
    <property type="entry name" value="MYELIN PROTEOLIPID PROTEIN"/>
    <property type="match status" value="1"/>
</dbReference>
<dbReference type="Pfam" id="PF01275">
    <property type="entry name" value="Myelin_PLP"/>
    <property type="match status" value="1"/>
</dbReference>
<dbReference type="PRINTS" id="PR00214">
    <property type="entry name" value="MYELINPLP"/>
</dbReference>
<dbReference type="SMART" id="SM00002">
    <property type="entry name" value="PLP"/>
    <property type="match status" value="1"/>
</dbReference>
<dbReference type="PROSITE" id="PS00575">
    <property type="entry name" value="MYELIN_PLP_1"/>
    <property type="match status" value="1"/>
</dbReference>
<dbReference type="PROSITE" id="PS01004">
    <property type="entry name" value="MYELIN_PLP_2"/>
    <property type="match status" value="1"/>
</dbReference>
<sequence length="277" mass="30077">MGLLECCARCLVGAPFASLVATGLCFFGVALFCGCGHEALTGTEKLIETYFSKNYQDYEYLINVIHAFQYVIYGTASFFFLYGALLLAEGFYTTGAVRQIFGDYKTTICGKGLSATVTGGQKGRGSRGQHQAHSLERVCHCLGKWLGHPDKFVGITYALTVVWLLVFACSAVPVYIYFNTWTTCQSIAFPSKTSASIGSLCADARMYGVLPWNAFPGKVCGSNLLSICKTAEFQMTFHLFIAAFVGAAATLVSLLTFMIAATYNFAVLKLMGRGTKF</sequence>
<name>MYPR_MOUSE</name>
<proteinExistence type="evidence at protein level"/>
<feature type="initiator methionine" description="Removed" evidence="2">
    <location>
        <position position="1"/>
    </location>
</feature>
<feature type="chain" id="PRO_0000159007" description="Myelin proteolipid protein">
    <location>
        <begin position="2"/>
        <end position="277"/>
    </location>
</feature>
<feature type="topological domain" description="Cytoplasmic" evidence="10">
    <location>
        <begin position="2"/>
        <end position="9"/>
    </location>
</feature>
<feature type="transmembrane region" description="Helical; Name=1" evidence="10">
    <location>
        <begin position="10"/>
        <end position="36"/>
    </location>
</feature>
<feature type="topological domain" description="Extracellular" evidence="10">
    <location>
        <begin position="37"/>
        <end position="63"/>
    </location>
</feature>
<feature type="transmembrane region" description="Helical; Name=2" evidence="10">
    <location>
        <begin position="64"/>
        <end position="88"/>
    </location>
</feature>
<feature type="topological domain" description="Cytoplasmic" evidence="10">
    <location>
        <begin position="89"/>
        <end position="151"/>
    </location>
</feature>
<feature type="transmembrane region" description="Helical; Name=3" evidence="10">
    <location>
        <begin position="152"/>
        <end position="177"/>
    </location>
</feature>
<feature type="topological domain" description="Extracellular" evidence="10">
    <location>
        <begin position="178"/>
        <end position="233"/>
    </location>
</feature>
<feature type="transmembrane region" description="Helical; Name=4" evidence="10">
    <location>
        <begin position="234"/>
        <end position="260"/>
    </location>
</feature>
<feature type="topological domain" description="Cytoplasmic" evidence="10">
    <location>
        <begin position="261"/>
        <end position="277"/>
    </location>
</feature>
<feature type="modified residue" description="Phosphoserine" evidence="4">
    <location>
        <position position="114"/>
    </location>
</feature>
<feature type="modified residue" description="Phosphothreonine" evidence="4">
    <location>
        <position position="116"/>
    </location>
</feature>
<feature type="modified residue" description="Phosphothreonine" evidence="4">
    <location>
        <position position="118"/>
    </location>
</feature>
<feature type="lipid moiety-binding region" description="S-palmitoyl cysteine" evidence="1">
    <location>
        <position position="6"/>
    </location>
</feature>
<feature type="lipid moiety-binding region" description="S-palmitoyl cysteine" evidence="1">
    <location>
        <position position="7"/>
    </location>
</feature>
<feature type="lipid moiety-binding region" description="S-palmitoyl cysteine" evidence="1">
    <location>
        <position position="10"/>
    </location>
</feature>
<feature type="lipid moiety-binding region" description="S-palmitoyl cysteine" evidence="1">
    <location>
        <position position="109"/>
    </location>
</feature>
<feature type="lipid moiety-binding region" description="S-palmitoyl cysteine" evidence="1">
    <location>
        <position position="139"/>
    </location>
</feature>
<feature type="lipid moiety-binding region" description="S-palmitoyl cysteine" evidence="1">
    <location>
        <position position="141"/>
    </location>
</feature>
<feature type="lipid moiety-binding region" description="O-palmitoyl serine" evidence="1">
    <location>
        <position position="199"/>
    </location>
</feature>
<feature type="disulfide bond" evidence="1">
    <location>
        <begin position="184"/>
        <end position="228"/>
    </location>
</feature>
<feature type="disulfide bond" evidence="1">
    <location>
        <begin position="201"/>
        <end position="220"/>
    </location>
</feature>
<feature type="splice variant" id="VSP_009194" description="In isoform DM-20." evidence="8 9">
    <location>
        <begin position="117"/>
        <end position="151"/>
    </location>
</feature>
<feature type="sequence variant" description="In Rumpshaker." evidence="5">
    <original>I</original>
    <variation>T</variation>
    <location>
        <position position="187"/>
    </location>
</feature>
<feature type="sequence variant" description="In Jimpy MSD." evidence="6">
    <original>A</original>
    <variation>V</variation>
    <location>
        <position position="243"/>
    </location>
</feature>
<feature type="sequence conflict" description="In Ref. 4 and 5." evidence="10" ref="4 5">
    <original>Y</original>
    <variation>C</variation>
    <location>
        <position position="70"/>
    </location>
</feature>
<feature type="sequence conflict" description="In Ref. 4; AAA39955." evidence="10" ref="4">
    <original>S</original>
    <variation>Y</variation>
    <location>
        <position position="126"/>
    </location>
</feature>